<dbReference type="EMBL" id="BX571657">
    <property type="protein sequence ID" value="CAE09174.1"/>
    <property type="molecule type" value="Genomic_DNA"/>
</dbReference>
<dbReference type="RefSeq" id="WP_011137974.1">
    <property type="nucleotide sequence ID" value="NC_005090.1"/>
</dbReference>
<dbReference type="SMR" id="Q7MSY2"/>
<dbReference type="STRING" id="273121.WS0000"/>
<dbReference type="KEGG" id="wsu:WS0000"/>
<dbReference type="eggNOG" id="COG0593">
    <property type="taxonomic scope" value="Bacteria"/>
</dbReference>
<dbReference type="HOGENOM" id="CLU_026910_3_2_7"/>
<dbReference type="Proteomes" id="UP000000422">
    <property type="component" value="Chromosome"/>
</dbReference>
<dbReference type="GO" id="GO:0005737">
    <property type="term" value="C:cytoplasm"/>
    <property type="evidence" value="ECO:0007669"/>
    <property type="project" value="UniProtKB-SubCell"/>
</dbReference>
<dbReference type="GO" id="GO:0005886">
    <property type="term" value="C:plasma membrane"/>
    <property type="evidence" value="ECO:0007669"/>
    <property type="project" value="TreeGrafter"/>
</dbReference>
<dbReference type="GO" id="GO:0005524">
    <property type="term" value="F:ATP binding"/>
    <property type="evidence" value="ECO:0007669"/>
    <property type="project" value="UniProtKB-UniRule"/>
</dbReference>
<dbReference type="GO" id="GO:0016887">
    <property type="term" value="F:ATP hydrolysis activity"/>
    <property type="evidence" value="ECO:0007669"/>
    <property type="project" value="InterPro"/>
</dbReference>
<dbReference type="GO" id="GO:0003688">
    <property type="term" value="F:DNA replication origin binding"/>
    <property type="evidence" value="ECO:0007669"/>
    <property type="project" value="UniProtKB-UniRule"/>
</dbReference>
<dbReference type="GO" id="GO:0008289">
    <property type="term" value="F:lipid binding"/>
    <property type="evidence" value="ECO:0007669"/>
    <property type="project" value="UniProtKB-KW"/>
</dbReference>
<dbReference type="GO" id="GO:0006270">
    <property type="term" value="P:DNA replication initiation"/>
    <property type="evidence" value="ECO:0007669"/>
    <property type="project" value="UniProtKB-UniRule"/>
</dbReference>
<dbReference type="GO" id="GO:0006275">
    <property type="term" value="P:regulation of DNA replication"/>
    <property type="evidence" value="ECO:0007669"/>
    <property type="project" value="UniProtKB-UniRule"/>
</dbReference>
<dbReference type="CDD" id="cd00009">
    <property type="entry name" value="AAA"/>
    <property type="match status" value="1"/>
</dbReference>
<dbReference type="CDD" id="cd06571">
    <property type="entry name" value="Bac_DnaA_C"/>
    <property type="match status" value="1"/>
</dbReference>
<dbReference type="FunFam" id="3.40.50.300:FF:000668">
    <property type="entry name" value="Chromosomal replication initiator protein DnaA"/>
    <property type="match status" value="1"/>
</dbReference>
<dbReference type="Gene3D" id="1.10.1750.10">
    <property type="match status" value="1"/>
</dbReference>
<dbReference type="Gene3D" id="1.10.8.60">
    <property type="match status" value="1"/>
</dbReference>
<dbReference type="Gene3D" id="3.30.300.180">
    <property type="match status" value="1"/>
</dbReference>
<dbReference type="Gene3D" id="3.40.50.300">
    <property type="entry name" value="P-loop containing nucleotide triphosphate hydrolases"/>
    <property type="match status" value="1"/>
</dbReference>
<dbReference type="HAMAP" id="MF_00377">
    <property type="entry name" value="DnaA_bact"/>
    <property type="match status" value="1"/>
</dbReference>
<dbReference type="InterPro" id="IPR003593">
    <property type="entry name" value="AAA+_ATPase"/>
</dbReference>
<dbReference type="InterPro" id="IPR001957">
    <property type="entry name" value="Chromosome_initiator_DnaA"/>
</dbReference>
<dbReference type="InterPro" id="IPR020591">
    <property type="entry name" value="Chromosome_initiator_DnaA-like"/>
</dbReference>
<dbReference type="InterPro" id="IPR018312">
    <property type="entry name" value="Chromosome_initiator_DnaA_CS"/>
</dbReference>
<dbReference type="InterPro" id="IPR013159">
    <property type="entry name" value="DnaA_C"/>
</dbReference>
<dbReference type="InterPro" id="IPR013317">
    <property type="entry name" value="DnaA_dom"/>
</dbReference>
<dbReference type="InterPro" id="IPR024633">
    <property type="entry name" value="DnaA_N_dom"/>
</dbReference>
<dbReference type="InterPro" id="IPR038454">
    <property type="entry name" value="DnaA_N_sf"/>
</dbReference>
<dbReference type="InterPro" id="IPR027417">
    <property type="entry name" value="P-loop_NTPase"/>
</dbReference>
<dbReference type="InterPro" id="IPR010921">
    <property type="entry name" value="Trp_repressor/repl_initiator"/>
</dbReference>
<dbReference type="NCBIfam" id="TIGR00362">
    <property type="entry name" value="DnaA"/>
    <property type="match status" value="1"/>
</dbReference>
<dbReference type="PANTHER" id="PTHR30050">
    <property type="entry name" value="CHROMOSOMAL REPLICATION INITIATOR PROTEIN DNAA"/>
    <property type="match status" value="1"/>
</dbReference>
<dbReference type="PANTHER" id="PTHR30050:SF2">
    <property type="entry name" value="CHROMOSOMAL REPLICATION INITIATOR PROTEIN DNAA"/>
    <property type="match status" value="1"/>
</dbReference>
<dbReference type="Pfam" id="PF00308">
    <property type="entry name" value="Bac_DnaA"/>
    <property type="match status" value="1"/>
</dbReference>
<dbReference type="Pfam" id="PF08299">
    <property type="entry name" value="Bac_DnaA_C"/>
    <property type="match status" value="1"/>
</dbReference>
<dbReference type="Pfam" id="PF11638">
    <property type="entry name" value="DnaA_N"/>
    <property type="match status" value="1"/>
</dbReference>
<dbReference type="PRINTS" id="PR00051">
    <property type="entry name" value="DNAA"/>
</dbReference>
<dbReference type="SMART" id="SM00382">
    <property type="entry name" value="AAA"/>
    <property type="match status" value="1"/>
</dbReference>
<dbReference type="SMART" id="SM00760">
    <property type="entry name" value="Bac_DnaA_C"/>
    <property type="match status" value="1"/>
</dbReference>
<dbReference type="SUPFAM" id="SSF52540">
    <property type="entry name" value="P-loop containing nucleoside triphosphate hydrolases"/>
    <property type="match status" value="1"/>
</dbReference>
<dbReference type="SUPFAM" id="SSF48295">
    <property type="entry name" value="TrpR-like"/>
    <property type="match status" value="1"/>
</dbReference>
<dbReference type="PROSITE" id="PS01008">
    <property type="entry name" value="DNAA"/>
    <property type="match status" value="1"/>
</dbReference>
<keyword id="KW-0067">ATP-binding</keyword>
<keyword id="KW-0963">Cytoplasm</keyword>
<keyword id="KW-0235">DNA replication</keyword>
<keyword id="KW-0238">DNA-binding</keyword>
<keyword id="KW-0446">Lipid-binding</keyword>
<keyword id="KW-0547">Nucleotide-binding</keyword>
<keyword id="KW-1185">Reference proteome</keyword>
<sequence>MLGDTTLKQLKDEISTLEYERYIKQLRYDEEASRTDLAVYIAPNQFIANWVKTKYGERLAHLFELSTGIRPKIEIRLGSLKKDVKSSSPKAGVSKGQKSTILNPSFTFDSFVVGNSNRFAYEVSQNVAKKQGIAYNPLLIYGGTGLGKTHLLNSIGNYNVAKGKSVIYVTSEQFLNDYLYHIRNNTMDRFRDKYRACDYLLIDDVQFFGGKPQIQEEFFHTFNELHNKNKQIVLTSDKTPKQIAGLEERLKSRFEWGMVSDIQPPELETKINIIKKKCEFDGIYLSNEIISYIATNMDNNIREIEGIIIKLNAYANLMNQEITLQFAKNVLKEQIKEERENITLENIIEVVSKELNVKPAEIKSKGRSKNIANARRIVIFLARTLTPNSMPSLAQFFGMKDHSSVSKAMKTVKTEIEEDANFKMVIEELKNKIKSRN</sequence>
<protein>
    <recommendedName>
        <fullName evidence="1">Chromosomal replication initiator protein DnaA</fullName>
    </recommendedName>
</protein>
<feature type="chain" id="PRO_0000114303" description="Chromosomal replication initiator protein DnaA">
    <location>
        <begin position="1"/>
        <end position="437"/>
    </location>
</feature>
<feature type="region of interest" description="Domain I, interacts with DnaA modulators" evidence="1">
    <location>
        <begin position="1"/>
        <end position="69"/>
    </location>
</feature>
<feature type="region of interest" description="Domain II" evidence="1">
    <location>
        <begin position="69"/>
        <end position="100"/>
    </location>
</feature>
<feature type="region of interest" description="Domain III, AAA+ region" evidence="1">
    <location>
        <begin position="101"/>
        <end position="315"/>
    </location>
</feature>
<feature type="region of interest" description="Domain IV, binds dsDNA" evidence="1">
    <location>
        <begin position="316"/>
        <end position="437"/>
    </location>
</feature>
<feature type="binding site" evidence="1">
    <location>
        <position position="145"/>
    </location>
    <ligand>
        <name>ATP</name>
        <dbReference type="ChEBI" id="CHEBI:30616"/>
    </ligand>
</feature>
<feature type="binding site" evidence="1">
    <location>
        <position position="147"/>
    </location>
    <ligand>
        <name>ATP</name>
        <dbReference type="ChEBI" id="CHEBI:30616"/>
    </ligand>
</feature>
<feature type="binding site" evidence="1">
    <location>
        <position position="148"/>
    </location>
    <ligand>
        <name>ATP</name>
        <dbReference type="ChEBI" id="CHEBI:30616"/>
    </ligand>
</feature>
<feature type="binding site" evidence="1">
    <location>
        <position position="149"/>
    </location>
    <ligand>
        <name>ATP</name>
        <dbReference type="ChEBI" id="CHEBI:30616"/>
    </ligand>
</feature>
<proteinExistence type="inferred from homology"/>
<reference key="1">
    <citation type="journal article" date="2003" name="Proc. Natl. Acad. Sci. U.S.A.">
        <title>Complete genome sequence and analysis of Wolinella succinogenes.</title>
        <authorList>
            <person name="Baar C."/>
            <person name="Eppinger M."/>
            <person name="Raddatz G."/>
            <person name="Simon J."/>
            <person name="Lanz C."/>
            <person name="Klimmek O."/>
            <person name="Nandakumar R."/>
            <person name="Gross R."/>
            <person name="Rosinus A."/>
            <person name="Keller H."/>
            <person name="Jagtap P."/>
            <person name="Linke B."/>
            <person name="Meyer F."/>
            <person name="Lederer H."/>
            <person name="Schuster S.C."/>
        </authorList>
    </citation>
    <scope>NUCLEOTIDE SEQUENCE [LARGE SCALE GENOMIC DNA]</scope>
    <source>
        <strain>ATCC 29543 / DSM 1740 / CCUG 13145 / JCM 31913 / LMG 7466 / NCTC 11488 / FDC 602W</strain>
    </source>
</reference>
<evidence type="ECO:0000255" key="1">
    <source>
        <dbReference type="HAMAP-Rule" id="MF_00377"/>
    </source>
</evidence>
<name>DNAA_WOLSU</name>
<organism>
    <name type="scientific">Wolinella succinogenes (strain ATCC 29543 / DSM 1740 / CCUG 13145 / JCM 31913 / LMG 7466 / NCTC 11488 / FDC 602W)</name>
    <name type="common">Vibrio succinogenes</name>
    <dbReference type="NCBI Taxonomy" id="273121"/>
    <lineage>
        <taxon>Bacteria</taxon>
        <taxon>Pseudomonadati</taxon>
        <taxon>Campylobacterota</taxon>
        <taxon>Epsilonproteobacteria</taxon>
        <taxon>Campylobacterales</taxon>
        <taxon>Helicobacteraceae</taxon>
        <taxon>Wolinella</taxon>
    </lineage>
</organism>
<accession>Q7MSY2</accession>
<gene>
    <name evidence="1" type="primary">dnaA</name>
    <name type="ordered locus">WS0000</name>
</gene>
<comment type="function">
    <text evidence="1">Plays an essential role in the initiation and regulation of chromosomal replication. ATP-DnaA binds to the origin of replication (oriC) to initiate formation of the DNA replication initiation complex once per cell cycle. Binds the DnaA box (a 9 base pair repeat at the origin) and separates the double-stranded (ds)DNA. Forms a right-handed helical filament on oriC DNA; dsDNA binds to the exterior of the filament while single-stranded (ss)DNA is stabiized in the filament's interior. The ATP-DnaA-oriC complex binds and stabilizes one strand of the AT-rich DNA unwinding element (DUE), permitting loading of DNA polymerase. After initiation quickly degrades to an ADP-DnaA complex that is not apt for DNA replication. Binds acidic phospholipids.</text>
</comment>
<comment type="subunit">
    <text evidence="1">Oligomerizes as a right-handed, spiral filament on DNA at oriC.</text>
</comment>
<comment type="subcellular location">
    <subcellularLocation>
        <location evidence="1">Cytoplasm</location>
    </subcellularLocation>
</comment>
<comment type="domain">
    <text evidence="1">Domain I is involved in oligomerization and binding regulators, domain II is flexibile and of varying length in different bacteria, domain III forms the AAA+ region, while domain IV binds dsDNA.</text>
</comment>
<comment type="similarity">
    <text evidence="1">Belongs to the DnaA family.</text>
</comment>